<reference key="1">
    <citation type="submission" date="2008-05" db="EMBL/GenBank/DDBJ databases">
        <title>Complete sequence of Chlorobium limicola DSM 245.</title>
        <authorList>
            <consortium name="US DOE Joint Genome Institute"/>
            <person name="Lucas S."/>
            <person name="Copeland A."/>
            <person name="Lapidus A."/>
            <person name="Glavina del Rio T."/>
            <person name="Dalin E."/>
            <person name="Tice H."/>
            <person name="Bruce D."/>
            <person name="Goodwin L."/>
            <person name="Pitluck S."/>
            <person name="Schmutz J."/>
            <person name="Larimer F."/>
            <person name="Land M."/>
            <person name="Hauser L."/>
            <person name="Kyrpides N."/>
            <person name="Ovchinnikova G."/>
            <person name="Zhao F."/>
            <person name="Li T."/>
            <person name="Liu Z."/>
            <person name="Overmann J."/>
            <person name="Bryant D.A."/>
            <person name="Richardson P."/>
        </authorList>
    </citation>
    <scope>NUCLEOTIDE SEQUENCE [LARGE SCALE GENOMIC DNA]</scope>
    <source>
        <strain>DSM 245 / NBRC 103803 / 6330</strain>
    </source>
</reference>
<feature type="chain" id="PRO_1000097729" description="tRNA pseudouridine synthase A">
    <location>
        <begin position="1"/>
        <end position="243"/>
    </location>
</feature>
<feature type="active site" description="Nucleophile" evidence="1">
    <location>
        <position position="53"/>
    </location>
</feature>
<feature type="binding site" evidence="1">
    <location>
        <position position="111"/>
    </location>
    <ligand>
        <name>substrate</name>
    </ligand>
</feature>
<evidence type="ECO:0000255" key="1">
    <source>
        <dbReference type="HAMAP-Rule" id="MF_00171"/>
    </source>
</evidence>
<name>TRUA_CHLL2</name>
<organism>
    <name type="scientific">Chlorobium limicola (strain DSM 245 / NBRC 103803 / 6330)</name>
    <dbReference type="NCBI Taxonomy" id="290315"/>
    <lineage>
        <taxon>Bacteria</taxon>
        <taxon>Pseudomonadati</taxon>
        <taxon>Chlorobiota</taxon>
        <taxon>Chlorobiia</taxon>
        <taxon>Chlorobiales</taxon>
        <taxon>Chlorobiaceae</taxon>
        <taxon>Chlorobium/Pelodictyon group</taxon>
        <taxon>Chlorobium</taxon>
    </lineage>
</organism>
<protein>
    <recommendedName>
        <fullName evidence="1">tRNA pseudouridine synthase A</fullName>
        <ecNumber evidence="1">5.4.99.12</ecNumber>
    </recommendedName>
    <alternativeName>
        <fullName evidence="1">tRNA pseudouridine(38-40) synthase</fullName>
    </alternativeName>
    <alternativeName>
        <fullName evidence="1">tRNA pseudouridylate synthase I</fullName>
    </alternativeName>
    <alternativeName>
        <fullName evidence="1">tRNA-uridine isomerase I</fullName>
    </alternativeName>
</protein>
<proteinExistence type="inferred from homology"/>
<gene>
    <name evidence="1" type="primary">truA</name>
    <name type="ordered locus">Clim_0964</name>
</gene>
<keyword id="KW-0413">Isomerase</keyword>
<keyword id="KW-0819">tRNA processing</keyword>
<comment type="function">
    <text evidence="1">Formation of pseudouridine at positions 38, 39 and 40 in the anticodon stem and loop of transfer RNAs.</text>
</comment>
<comment type="catalytic activity">
    <reaction evidence="1">
        <text>uridine(38/39/40) in tRNA = pseudouridine(38/39/40) in tRNA</text>
        <dbReference type="Rhea" id="RHEA:22376"/>
        <dbReference type="Rhea" id="RHEA-COMP:10085"/>
        <dbReference type="Rhea" id="RHEA-COMP:10087"/>
        <dbReference type="ChEBI" id="CHEBI:65314"/>
        <dbReference type="ChEBI" id="CHEBI:65315"/>
        <dbReference type="EC" id="5.4.99.12"/>
    </reaction>
</comment>
<comment type="subunit">
    <text evidence="1">Homodimer.</text>
</comment>
<comment type="similarity">
    <text evidence="1">Belongs to the tRNA pseudouridine synthase TruA family.</text>
</comment>
<accession>B3EIU9</accession>
<dbReference type="EC" id="5.4.99.12" evidence="1"/>
<dbReference type="EMBL" id="CP001097">
    <property type="protein sequence ID" value="ACD90040.1"/>
    <property type="molecule type" value="Genomic_DNA"/>
</dbReference>
<dbReference type="RefSeq" id="WP_012465919.1">
    <property type="nucleotide sequence ID" value="NC_010803.1"/>
</dbReference>
<dbReference type="SMR" id="B3EIU9"/>
<dbReference type="STRING" id="290315.Clim_0964"/>
<dbReference type="KEGG" id="cli:Clim_0964"/>
<dbReference type="eggNOG" id="COG0101">
    <property type="taxonomic scope" value="Bacteria"/>
</dbReference>
<dbReference type="HOGENOM" id="CLU_014673_0_2_10"/>
<dbReference type="OrthoDB" id="9811823at2"/>
<dbReference type="Proteomes" id="UP000008841">
    <property type="component" value="Chromosome"/>
</dbReference>
<dbReference type="GO" id="GO:0003723">
    <property type="term" value="F:RNA binding"/>
    <property type="evidence" value="ECO:0007669"/>
    <property type="project" value="InterPro"/>
</dbReference>
<dbReference type="GO" id="GO:0160147">
    <property type="term" value="F:tRNA pseudouridine(38-40) synthase activity"/>
    <property type="evidence" value="ECO:0007669"/>
    <property type="project" value="UniProtKB-EC"/>
</dbReference>
<dbReference type="GO" id="GO:0031119">
    <property type="term" value="P:tRNA pseudouridine synthesis"/>
    <property type="evidence" value="ECO:0007669"/>
    <property type="project" value="UniProtKB-UniRule"/>
</dbReference>
<dbReference type="CDD" id="cd02570">
    <property type="entry name" value="PseudoU_synth_EcTruA"/>
    <property type="match status" value="1"/>
</dbReference>
<dbReference type="FunFam" id="3.30.70.580:FF:000001">
    <property type="entry name" value="tRNA pseudouridine synthase A"/>
    <property type="match status" value="1"/>
</dbReference>
<dbReference type="Gene3D" id="3.30.70.660">
    <property type="entry name" value="Pseudouridine synthase I, catalytic domain, C-terminal subdomain"/>
    <property type="match status" value="1"/>
</dbReference>
<dbReference type="Gene3D" id="3.30.70.580">
    <property type="entry name" value="Pseudouridine synthase I, catalytic domain, N-terminal subdomain"/>
    <property type="match status" value="1"/>
</dbReference>
<dbReference type="HAMAP" id="MF_00171">
    <property type="entry name" value="TruA"/>
    <property type="match status" value="1"/>
</dbReference>
<dbReference type="InterPro" id="IPR020103">
    <property type="entry name" value="PsdUridine_synth_cat_dom_sf"/>
</dbReference>
<dbReference type="InterPro" id="IPR001406">
    <property type="entry name" value="PsdUridine_synth_TruA"/>
</dbReference>
<dbReference type="InterPro" id="IPR020097">
    <property type="entry name" value="PsdUridine_synth_TruA_a/b_dom"/>
</dbReference>
<dbReference type="InterPro" id="IPR020095">
    <property type="entry name" value="PsdUridine_synth_TruA_C"/>
</dbReference>
<dbReference type="InterPro" id="IPR020094">
    <property type="entry name" value="TruA/RsuA/RluB/E/F_N"/>
</dbReference>
<dbReference type="NCBIfam" id="TIGR00071">
    <property type="entry name" value="hisT_truA"/>
    <property type="match status" value="1"/>
</dbReference>
<dbReference type="PANTHER" id="PTHR11142">
    <property type="entry name" value="PSEUDOURIDYLATE SYNTHASE"/>
    <property type="match status" value="1"/>
</dbReference>
<dbReference type="PANTHER" id="PTHR11142:SF0">
    <property type="entry name" value="TRNA PSEUDOURIDINE SYNTHASE-LIKE 1"/>
    <property type="match status" value="1"/>
</dbReference>
<dbReference type="Pfam" id="PF01416">
    <property type="entry name" value="PseudoU_synth_1"/>
    <property type="match status" value="2"/>
</dbReference>
<dbReference type="PIRSF" id="PIRSF001430">
    <property type="entry name" value="tRNA_psdUrid_synth"/>
    <property type="match status" value="1"/>
</dbReference>
<dbReference type="SUPFAM" id="SSF55120">
    <property type="entry name" value="Pseudouridine synthase"/>
    <property type="match status" value="1"/>
</dbReference>
<sequence>MKNIRFDVEYDGTDFCGWQRQPGGIQTLQGELEAQLGRILQENISLTAAGRTDKGVHARLQVVNFMTGSAMELSKMAHALNSLLPDTVRVSNPHVVPLDFHARFSAKEREYRYFLLEEPSALRCRFTGCSKGSLHIGVMQDAAGLLVGEHDFLLLSKEPADKKNPVCLIKECEWQEENGVFVFRIRANRFLRSMVRYLVGVMIAVGRGRAVPEDLGMLLDDGLMTFPLFPAEPNGLFLWDVSY</sequence>